<comment type="function">
    <text evidence="1">Attaches the virus to sialic acid-containing cell receptors and thereby initiating infection. Binding of HN protein to the receptor induces a conformational change that allows the F protein to trigger virion/cell membranes fusion (By similarity).</text>
</comment>
<comment type="function">
    <text evidence="1">Neuraminidase activity ensures the efficient spread of the virus by dissociating the mature virions from the neuraminic acid containing glycoproteins.</text>
</comment>
<comment type="catalytic activity">
    <reaction evidence="4">
        <text>Hydrolysis of alpha-(2-&gt;3)-, alpha-(2-&gt;6)-, alpha-(2-&gt;8)- glycosidic linkages of terminal sialic acid residues in oligosaccharides, glycoproteins, glycolipids, colominic acid and synthetic substrates.</text>
        <dbReference type="EC" id="3.2.1.18"/>
    </reaction>
</comment>
<comment type="subunit">
    <text evidence="2 4">Homotetramer; composed of disulfide-linked homodimers (By similarity). Interacts with F protein trimer (By similarity).</text>
</comment>
<comment type="subcellular location">
    <subcellularLocation>
        <location evidence="7">Virion membrane</location>
        <topology evidence="7">Single-pass type II membrane protein</topology>
    </subcellularLocation>
    <subcellularLocation>
        <location evidence="7">Host cell membrane</location>
        <topology evidence="7">Single-pass type II membrane protein</topology>
    </subcellularLocation>
    <text evidence="1">Folded in the endoplasmic reticulum.</text>
</comment>
<comment type="domain">
    <text evidence="4">The C-terminus (head domain) is involved in binding the cellular receptor.</text>
</comment>
<comment type="PTM">
    <text evidence="1">N-glycosylated; glycans consist of a mixture of high mannose-type oligosaccharides and of complex-type oligosaccharides.</text>
</comment>
<comment type="similarity">
    <text evidence="7">Belongs to the paramyxoviruses hemagglutinin-neuraminidase family.</text>
</comment>
<accession>P03425</accession>
<organism>
    <name type="scientific">Sendai virus (strain Harris)</name>
    <name type="common">SeV</name>
    <dbReference type="NCBI Taxonomy" id="11196"/>
    <lineage>
        <taxon>Viruses</taxon>
        <taxon>Riboviria</taxon>
        <taxon>Orthornavirae</taxon>
        <taxon>Negarnaviricota</taxon>
        <taxon>Haploviricotina</taxon>
        <taxon>Monjiviricetes</taxon>
        <taxon>Mononegavirales</taxon>
        <taxon>Paramyxoviridae</taxon>
        <taxon>Feraresvirinae</taxon>
        <taxon>Respirovirus</taxon>
        <taxon>Respirovirus muris</taxon>
    </lineage>
</organism>
<name>HN_SENDH</name>
<evidence type="ECO:0000250" key="1"/>
<evidence type="ECO:0000250" key="2">
    <source>
        <dbReference type="UniProtKB" id="P04853"/>
    </source>
</evidence>
<evidence type="ECO:0000250" key="3">
    <source>
        <dbReference type="UniProtKB" id="Q91UL0"/>
    </source>
</evidence>
<evidence type="ECO:0000250" key="4">
    <source>
        <dbReference type="UniProtKB" id="Q9WAF5"/>
    </source>
</evidence>
<evidence type="ECO:0000255" key="5"/>
<evidence type="ECO:0000256" key="6">
    <source>
        <dbReference type="SAM" id="MobiDB-lite"/>
    </source>
</evidence>
<evidence type="ECO:0000305" key="7"/>
<proteinExistence type="inferred from homology"/>
<protein>
    <recommendedName>
        <fullName>Hemagglutinin-neuraminidase</fullName>
        <shortName>HN protein</shortName>
        <ecNumber evidence="4">3.2.1.18</ecNumber>
    </recommendedName>
</protein>
<reference key="1">
    <citation type="journal article" date="1985" name="Cell">
        <title>Sequence determination of the Sendai virus HN gene and its comparison to the influenza virus glycoproteins.</title>
        <authorList>
            <person name="Blumberg B.M."/>
            <person name="Giorgi C."/>
            <person name="Roux L."/>
            <person name="Raju R."/>
            <person name="Dowling P."/>
            <person name="Chollet A."/>
            <person name="Kolakofsky D."/>
        </authorList>
    </citation>
    <scope>NUCLEOTIDE SEQUENCE [GENOMIC RNA]</scope>
</reference>
<dbReference type="EC" id="3.2.1.18" evidence="4"/>
<dbReference type="EMBL" id="M12397">
    <property type="protein sequence ID" value="AAA47810.1"/>
    <property type="molecule type" value="Genomic_RNA"/>
</dbReference>
<dbReference type="PIR" id="A00877">
    <property type="entry name" value="HNNZS"/>
</dbReference>
<dbReference type="SMR" id="P03425"/>
<dbReference type="CAZy" id="GH83">
    <property type="family name" value="Glycoside Hydrolase Family 83"/>
</dbReference>
<dbReference type="GlyCosmos" id="P03425">
    <property type="glycosylation" value="3 sites, No reported glycans"/>
</dbReference>
<dbReference type="GO" id="GO:0020002">
    <property type="term" value="C:host cell plasma membrane"/>
    <property type="evidence" value="ECO:0007669"/>
    <property type="project" value="UniProtKB-SubCell"/>
</dbReference>
<dbReference type="GO" id="GO:0016020">
    <property type="term" value="C:membrane"/>
    <property type="evidence" value="ECO:0007669"/>
    <property type="project" value="UniProtKB-KW"/>
</dbReference>
<dbReference type="GO" id="GO:0019031">
    <property type="term" value="C:viral envelope"/>
    <property type="evidence" value="ECO:0007669"/>
    <property type="project" value="UniProtKB-KW"/>
</dbReference>
<dbReference type="GO" id="GO:0055036">
    <property type="term" value="C:virion membrane"/>
    <property type="evidence" value="ECO:0007669"/>
    <property type="project" value="UniProtKB-SubCell"/>
</dbReference>
<dbReference type="GO" id="GO:0004308">
    <property type="term" value="F:exo-alpha-sialidase activity"/>
    <property type="evidence" value="ECO:0007669"/>
    <property type="project" value="UniProtKB-EC"/>
</dbReference>
<dbReference type="GO" id="GO:0046789">
    <property type="term" value="F:host cell surface receptor binding"/>
    <property type="evidence" value="ECO:0007669"/>
    <property type="project" value="InterPro"/>
</dbReference>
<dbReference type="GO" id="GO:0046718">
    <property type="term" value="P:symbiont entry into host cell"/>
    <property type="evidence" value="ECO:0007669"/>
    <property type="project" value="UniProtKB-KW"/>
</dbReference>
<dbReference type="GO" id="GO:0019062">
    <property type="term" value="P:virion attachment to host cell"/>
    <property type="evidence" value="ECO:0007669"/>
    <property type="project" value="UniProtKB-KW"/>
</dbReference>
<dbReference type="CDD" id="cd15469">
    <property type="entry name" value="HN"/>
    <property type="match status" value="1"/>
</dbReference>
<dbReference type="FunFam" id="2.120.10.10:FF:000015">
    <property type="entry name" value="Hemagglutinin-neuraminidase"/>
    <property type="match status" value="1"/>
</dbReference>
<dbReference type="Gene3D" id="2.120.10.10">
    <property type="match status" value="1"/>
</dbReference>
<dbReference type="InterPro" id="IPR016285">
    <property type="entry name" value="Hemagglutn-neuramid"/>
</dbReference>
<dbReference type="InterPro" id="IPR000665">
    <property type="entry name" value="Hemagglutn/HN"/>
</dbReference>
<dbReference type="InterPro" id="IPR036278">
    <property type="entry name" value="Sialidase_sf"/>
</dbReference>
<dbReference type="Pfam" id="PF00423">
    <property type="entry name" value="HN"/>
    <property type="match status" value="1"/>
</dbReference>
<dbReference type="PIRSF" id="PIRSF001072">
    <property type="entry name" value="Hemagglut-neuramid_paramyxoV"/>
    <property type="match status" value="1"/>
</dbReference>
<dbReference type="SUPFAM" id="SSF50939">
    <property type="entry name" value="Sialidases"/>
    <property type="match status" value="1"/>
</dbReference>
<feature type="chain" id="PRO_0000142638" description="Hemagglutinin-neuraminidase">
    <location>
        <begin position="1"/>
        <end position="576"/>
    </location>
</feature>
<feature type="topological domain" description="Intravirion" evidence="1">
    <location>
        <begin position="1"/>
        <end position="37"/>
    </location>
</feature>
<feature type="transmembrane region" description="Helical" evidence="1">
    <location>
        <begin position="38"/>
        <end position="58"/>
    </location>
</feature>
<feature type="topological domain" description="Virion surface" evidence="1">
    <location>
        <begin position="59"/>
        <end position="576"/>
    </location>
</feature>
<feature type="region of interest" description="Disordered" evidence="6">
    <location>
        <begin position="1"/>
        <end position="24"/>
    </location>
</feature>
<feature type="region of interest" description="Incorporation in virion" evidence="1">
    <location>
        <begin position="10"/>
        <end position="14"/>
    </location>
</feature>
<feature type="region of interest" description="Involved in interaction with F protein" evidence="1">
    <location>
        <begin position="59"/>
        <end position="140"/>
    </location>
</feature>
<feature type="region of interest" description="Involved in neuraminidase activity" evidence="3">
    <location>
        <begin position="254"/>
        <end position="259"/>
    </location>
</feature>
<feature type="compositionally biased region" description="Basic and acidic residues" evidence="6">
    <location>
        <begin position="1"/>
        <end position="10"/>
    </location>
</feature>
<feature type="compositionally biased region" description="Polar residues" evidence="6">
    <location>
        <begin position="11"/>
        <end position="23"/>
    </location>
</feature>
<feature type="glycosylation site" description="N-linked (GlcNAc...) asparagine; by host" evidence="1">
    <location>
        <position position="77"/>
    </location>
</feature>
<feature type="glycosylation site" description="N-linked (GlcNAc...) asparagine; by host" evidence="1">
    <location>
        <position position="499"/>
    </location>
</feature>
<feature type="glycosylation site" description="N-linked (GlcNAc...) asparagine; by host" evidence="1">
    <location>
        <position position="511"/>
    </location>
</feature>
<feature type="disulfide bond" description="Interchain" evidence="5">
    <location>
        <position position="129"/>
    </location>
</feature>
<feature type="disulfide bond" evidence="4">
    <location>
        <begin position="192"/>
        <end position="216"/>
    </location>
</feature>
<feature type="disulfide bond" evidence="4">
    <location>
        <begin position="258"/>
        <end position="271"/>
    </location>
</feature>
<feature type="disulfide bond" evidence="4">
    <location>
        <begin position="357"/>
        <end position="469"/>
    </location>
</feature>
<feature type="disulfide bond" evidence="4">
    <location>
        <begin position="463"/>
        <end position="473"/>
    </location>
</feature>
<feature type="disulfide bond" evidence="4">
    <location>
        <begin position="536"/>
        <end position="545"/>
    </location>
</feature>
<keyword id="KW-1015">Disulfide bond</keyword>
<keyword id="KW-0325">Glycoprotein</keyword>
<keyword id="KW-0348">Hemagglutinin</keyword>
<keyword id="KW-1032">Host cell membrane</keyword>
<keyword id="KW-1043">Host membrane</keyword>
<keyword id="KW-0945">Host-virus interaction</keyword>
<keyword id="KW-0378">Hydrolase</keyword>
<keyword id="KW-0472">Membrane</keyword>
<keyword id="KW-0735">Signal-anchor</keyword>
<keyword id="KW-0812">Transmembrane</keyword>
<keyword id="KW-1133">Transmembrane helix</keyword>
<keyword id="KW-1161">Viral attachment to host cell</keyword>
<keyword id="KW-0261">Viral envelope protein</keyword>
<keyword id="KW-0946">Virion</keyword>
<keyword id="KW-1160">Virus entry into host cell</keyword>
<gene>
    <name type="primary">HN</name>
</gene>
<organismHost>
    <name type="scientific">Cavia cutleri</name>
    <name type="common">Guinea pig</name>
    <dbReference type="NCBI Taxonomy" id="10144"/>
</organismHost>
<organismHost>
    <name type="scientific">Cricetidae sp.</name>
    <name type="common">Hamster</name>
    <dbReference type="NCBI Taxonomy" id="36483"/>
</organismHost>
<organismHost>
    <name type="scientific">Mus musculus</name>
    <name type="common">Mouse</name>
    <dbReference type="NCBI Taxonomy" id="10090"/>
</organismHost>
<organismHost>
    <name type="scientific">Rattus norvegicus</name>
    <name type="common">Rat</name>
    <dbReference type="NCBI Taxonomy" id="10116"/>
</organismHost>
<sequence>MDGDRGKRDSYWSTSPSGSTTKLASGWERSSKVDTWLLILSFTQWALSIATVIICIIISARQGYSTKEYSMTVEALNMSSREVKESLTSLIRQEVIARAVNIQSSVQTGIPVLLNKNSRDVIQMIDKSCSRQELTQLCESTIAVHHAEGIAPLEPHSFWRCPVGEPYLSSDPKISLLLGPSLLSGSTTISGCVRLPSLSIGEAIYAYSSNLITQGCADIGKSYQVLQLGYISLNSDMFPDLNPVVSHTYDINDNRKSCSVVATGTRGYQLCSMPTVDERTDYSSDGIEDLVLDVLDLKGSTKSHRYRNSEVDLDHPFSALYPSVGNGIATEGSLIFLGYGGLTTPLQGDTKCRTQGCQQVSQDTCNEALKITWLGGKQVVNVIIRVNDYLSERPKIRVTTIPITQNYLGAEGRLLKLGDRVYIYTRSSGWHSQLQIGVLDVSHPLTINWTPHEALSRPGNKECNWYNTCPKECISGVYTDAYPLSPDAANVATVTLYANTSRVNPTIMYSNTTNIINMLRIKDVQLEVAYTTISSCITHFGKGYCFHIIEINQKSLNTLQPMLFKTSIPKLCKAES</sequence>